<protein>
    <recommendedName>
        <fullName evidence="1">Pyridoxine/pyridoxamine 5'-phosphate oxidase</fullName>
        <ecNumber evidence="1">1.4.3.5</ecNumber>
    </recommendedName>
    <alternativeName>
        <fullName evidence="1">PNP/PMP oxidase</fullName>
        <shortName evidence="1">PNPOx</shortName>
    </alternativeName>
    <alternativeName>
        <fullName evidence="1">Pyridoxal 5'-phosphate synthase</fullName>
    </alternativeName>
</protein>
<reference key="1">
    <citation type="journal article" date="2011" name="J. Bacteriol.">
        <title>Comparative genomics of 28 Salmonella enterica isolates: evidence for CRISPR-mediated adaptive sublineage evolution.</title>
        <authorList>
            <person name="Fricke W.F."/>
            <person name="Mammel M.K."/>
            <person name="McDermott P.F."/>
            <person name="Tartera C."/>
            <person name="White D.G."/>
            <person name="Leclerc J.E."/>
            <person name="Ravel J."/>
            <person name="Cebula T.A."/>
        </authorList>
    </citation>
    <scope>NUCLEOTIDE SEQUENCE [LARGE SCALE GENOMIC DNA]</scope>
    <source>
        <strain>SL254</strain>
    </source>
</reference>
<proteinExistence type="inferred from homology"/>
<gene>
    <name evidence="1" type="primary">pdxH</name>
    <name type="ordered locus">SNSL254_A1558</name>
</gene>
<keyword id="KW-0285">Flavoprotein</keyword>
<keyword id="KW-0288">FMN</keyword>
<keyword id="KW-0560">Oxidoreductase</keyword>
<keyword id="KW-0664">Pyridoxine biosynthesis</keyword>
<accession>B4T585</accession>
<organism>
    <name type="scientific">Salmonella newport (strain SL254)</name>
    <dbReference type="NCBI Taxonomy" id="423368"/>
    <lineage>
        <taxon>Bacteria</taxon>
        <taxon>Pseudomonadati</taxon>
        <taxon>Pseudomonadota</taxon>
        <taxon>Gammaproteobacteria</taxon>
        <taxon>Enterobacterales</taxon>
        <taxon>Enterobacteriaceae</taxon>
        <taxon>Salmonella</taxon>
    </lineage>
</organism>
<evidence type="ECO:0000255" key="1">
    <source>
        <dbReference type="HAMAP-Rule" id="MF_01629"/>
    </source>
</evidence>
<sequence>MSDNDQLQQIAHLRREYTKGGLRRRDLPAEPLTLFERWLGQACDARLADPTAMVVATVDDKGQPYQRIVLLKHYDEKGLVFYTNLGSRKAHQIEHNPRISLLFPWHMLERQVMVTGKAERLSTLEVVRYFHSRPRDSQIGAWVSKQSSRISARGILESKFLELKQKFQQGEVPLPSFWGGFRVSIEQMEFWQGGEHRLHDRFLYQRDDGAWKIDRLAP</sequence>
<name>PDXH_SALNS</name>
<comment type="function">
    <text evidence="1">Catalyzes the oxidation of either pyridoxine 5'-phosphate (PNP) or pyridoxamine 5'-phosphate (PMP) into pyridoxal 5'-phosphate (PLP).</text>
</comment>
<comment type="catalytic activity">
    <reaction evidence="1">
        <text>pyridoxamine 5'-phosphate + O2 + H2O = pyridoxal 5'-phosphate + H2O2 + NH4(+)</text>
        <dbReference type="Rhea" id="RHEA:15817"/>
        <dbReference type="ChEBI" id="CHEBI:15377"/>
        <dbReference type="ChEBI" id="CHEBI:15379"/>
        <dbReference type="ChEBI" id="CHEBI:16240"/>
        <dbReference type="ChEBI" id="CHEBI:28938"/>
        <dbReference type="ChEBI" id="CHEBI:58451"/>
        <dbReference type="ChEBI" id="CHEBI:597326"/>
        <dbReference type="EC" id="1.4.3.5"/>
    </reaction>
</comment>
<comment type="catalytic activity">
    <reaction evidence="1">
        <text>pyridoxine 5'-phosphate + O2 = pyridoxal 5'-phosphate + H2O2</text>
        <dbReference type="Rhea" id="RHEA:15149"/>
        <dbReference type="ChEBI" id="CHEBI:15379"/>
        <dbReference type="ChEBI" id="CHEBI:16240"/>
        <dbReference type="ChEBI" id="CHEBI:58589"/>
        <dbReference type="ChEBI" id="CHEBI:597326"/>
        <dbReference type="EC" id="1.4.3.5"/>
    </reaction>
</comment>
<comment type="cofactor">
    <cofactor evidence="1">
        <name>FMN</name>
        <dbReference type="ChEBI" id="CHEBI:58210"/>
    </cofactor>
    <text evidence="1">Binds 1 FMN per subunit.</text>
</comment>
<comment type="pathway">
    <text evidence="1">Cofactor metabolism; pyridoxal 5'-phosphate salvage; pyridoxal 5'-phosphate from pyridoxamine 5'-phosphate: step 1/1.</text>
</comment>
<comment type="pathway">
    <text evidence="1">Cofactor metabolism; pyridoxal 5'-phosphate salvage; pyridoxal 5'-phosphate from pyridoxine 5'-phosphate: step 1/1.</text>
</comment>
<comment type="subunit">
    <text evidence="1">Homodimer.</text>
</comment>
<comment type="similarity">
    <text evidence="1">Belongs to the pyridoxamine 5'-phosphate oxidase family.</text>
</comment>
<dbReference type="EC" id="1.4.3.5" evidence="1"/>
<dbReference type="EMBL" id="CP001113">
    <property type="protein sequence ID" value="ACF61998.1"/>
    <property type="molecule type" value="Genomic_DNA"/>
</dbReference>
<dbReference type="RefSeq" id="WP_001282334.1">
    <property type="nucleotide sequence ID" value="NZ_CCMR01000003.1"/>
</dbReference>
<dbReference type="SMR" id="B4T585"/>
<dbReference type="KEGG" id="see:SNSL254_A1558"/>
<dbReference type="HOGENOM" id="CLU_032263_2_2_6"/>
<dbReference type="UniPathway" id="UPA01068">
    <property type="reaction ID" value="UER00304"/>
</dbReference>
<dbReference type="UniPathway" id="UPA01068">
    <property type="reaction ID" value="UER00305"/>
</dbReference>
<dbReference type="Proteomes" id="UP000008824">
    <property type="component" value="Chromosome"/>
</dbReference>
<dbReference type="GO" id="GO:0010181">
    <property type="term" value="F:FMN binding"/>
    <property type="evidence" value="ECO:0007669"/>
    <property type="project" value="UniProtKB-UniRule"/>
</dbReference>
<dbReference type="GO" id="GO:0004733">
    <property type="term" value="F:pyridoxamine phosphate oxidase activity"/>
    <property type="evidence" value="ECO:0007669"/>
    <property type="project" value="UniProtKB-UniRule"/>
</dbReference>
<dbReference type="GO" id="GO:0008615">
    <property type="term" value="P:pyridoxine biosynthetic process"/>
    <property type="evidence" value="ECO:0007669"/>
    <property type="project" value="UniProtKB-KW"/>
</dbReference>
<dbReference type="FunFam" id="2.30.110.10:FF:000001">
    <property type="entry name" value="Pyridoxine/pyridoxamine 5'-phosphate oxidase"/>
    <property type="match status" value="1"/>
</dbReference>
<dbReference type="Gene3D" id="2.30.110.10">
    <property type="entry name" value="Electron Transport, Fmn-binding Protein, Chain A"/>
    <property type="match status" value="1"/>
</dbReference>
<dbReference type="HAMAP" id="MF_01629">
    <property type="entry name" value="PdxH"/>
    <property type="match status" value="1"/>
</dbReference>
<dbReference type="InterPro" id="IPR000659">
    <property type="entry name" value="Pyridox_Oxase"/>
</dbReference>
<dbReference type="InterPro" id="IPR019740">
    <property type="entry name" value="Pyridox_Oxase_CS"/>
</dbReference>
<dbReference type="InterPro" id="IPR011576">
    <property type="entry name" value="Pyridox_Oxase_N"/>
</dbReference>
<dbReference type="InterPro" id="IPR019576">
    <property type="entry name" value="Pyridoxamine_oxidase_dimer_C"/>
</dbReference>
<dbReference type="InterPro" id="IPR012349">
    <property type="entry name" value="Split_barrel_FMN-bd"/>
</dbReference>
<dbReference type="NCBIfam" id="TIGR00558">
    <property type="entry name" value="pdxH"/>
    <property type="match status" value="1"/>
</dbReference>
<dbReference type="NCBIfam" id="NF004231">
    <property type="entry name" value="PRK05679.1"/>
    <property type="match status" value="1"/>
</dbReference>
<dbReference type="PANTHER" id="PTHR10851:SF0">
    <property type="entry name" value="PYRIDOXINE-5'-PHOSPHATE OXIDASE"/>
    <property type="match status" value="1"/>
</dbReference>
<dbReference type="PANTHER" id="PTHR10851">
    <property type="entry name" value="PYRIDOXINE-5-PHOSPHATE OXIDASE"/>
    <property type="match status" value="1"/>
</dbReference>
<dbReference type="Pfam" id="PF10590">
    <property type="entry name" value="PNP_phzG_C"/>
    <property type="match status" value="1"/>
</dbReference>
<dbReference type="Pfam" id="PF01243">
    <property type="entry name" value="PNPOx_N"/>
    <property type="match status" value="1"/>
</dbReference>
<dbReference type="PIRSF" id="PIRSF000190">
    <property type="entry name" value="Pyd_amn-ph_oxd"/>
    <property type="match status" value="1"/>
</dbReference>
<dbReference type="SUPFAM" id="SSF50475">
    <property type="entry name" value="FMN-binding split barrel"/>
    <property type="match status" value="1"/>
</dbReference>
<dbReference type="PROSITE" id="PS01064">
    <property type="entry name" value="PYRIDOX_OXIDASE"/>
    <property type="match status" value="1"/>
</dbReference>
<feature type="chain" id="PRO_1000186337" description="Pyridoxine/pyridoxamine 5'-phosphate oxidase">
    <location>
        <begin position="1"/>
        <end position="218"/>
    </location>
</feature>
<feature type="binding site" evidence="1">
    <location>
        <begin position="14"/>
        <end position="17"/>
    </location>
    <ligand>
        <name>substrate</name>
    </ligand>
</feature>
<feature type="binding site" evidence="1">
    <location>
        <begin position="67"/>
        <end position="72"/>
    </location>
    <ligand>
        <name>FMN</name>
        <dbReference type="ChEBI" id="CHEBI:58210"/>
    </ligand>
</feature>
<feature type="binding site" evidence="1">
    <location>
        <position position="72"/>
    </location>
    <ligand>
        <name>substrate</name>
    </ligand>
</feature>
<feature type="binding site" evidence="1">
    <location>
        <begin position="82"/>
        <end position="83"/>
    </location>
    <ligand>
        <name>FMN</name>
        <dbReference type="ChEBI" id="CHEBI:58210"/>
    </ligand>
</feature>
<feature type="binding site" evidence="1">
    <location>
        <position position="88"/>
    </location>
    <ligand>
        <name>FMN</name>
        <dbReference type="ChEBI" id="CHEBI:58210"/>
    </ligand>
</feature>
<feature type="binding site" evidence="1">
    <location>
        <position position="89"/>
    </location>
    <ligand>
        <name>FMN</name>
        <dbReference type="ChEBI" id="CHEBI:58210"/>
    </ligand>
</feature>
<feature type="binding site" evidence="1">
    <location>
        <position position="111"/>
    </location>
    <ligand>
        <name>FMN</name>
        <dbReference type="ChEBI" id="CHEBI:58210"/>
    </ligand>
</feature>
<feature type="binding site" evidence="1">
    <location>
        <position position="129"/>
    </location>
    <ligand>
        <name>substrate</name>
    </ligand>
</feature>
<feature type="binding site" evidence="1">
    <location>
        <position position="133"/>
    </location>
    <ligand>
        <name>substrate</name>
    </ligand>
</feature>
<feature type="binding site" evidence="1">
    <location>
        <position position="137"/>
    </location>
    <ligand>
        <name>substrate</name>
    </ligand>
</feature>
<feature type="binding site" evidence="1">
    <location>
        <begin position="146"/>
        <end position="147"/>
    </location>
    <ligand>
        <name>FMN</name>
        <dbReference type="ChEBI" id="CHEBI:58210"/>
    </ligand>
</feature>
<feature type="binding site" evidence="1">
    <location>
        <position position="191"/>
    </location>
    <ligand>
        <name>FMN</name>
        <dbReference type="ChEBI" id="CHEBI:58210"/>
    </ligand>
</feature>
<feature type="binding site" evidence="1">
    <location>
        <begin position="197"/>
        <end position="199"/>
    </location>
    <ligand>
        <name>substrate</name>
    </ligand>
</feature>
<feature type="binding site" evidence="1">
    <location>
        <position position="201"/>
    </location>
    <ligand>
        <name>FMN</name>
        <dbReference type="ChEBI" id="CHEBI:58210"/>
    </ligand>
</feature>